<evidence type="ECO:0000250" key="1"/>
<evidence type="ECO:0000255" key="2">
    <source>
        <dbReference type="HAMAP-Rule" id="MF_00247"/>
    </source>
</evidence>
<name>STHA_SALTI</name>
<gene>
    <name evidence="2" type="primary">sthA</name>
    <name evidence="2" type="synonym">udhA</name>
    <name type="ordered locus">STY3748</name>
    <name type="ordered locus">t3499</name>
</gene>
<sequence>MPHSWDYDAVVIGSGPGGEGAAMGLVKQGARVAVIERYHNVGGGCTHWGTIPSKALRHAVSRIIEFNQNPLYSDHSRLLRSSFADILNHADNVINQQTRMRQGFYERNHCEILQGNAHFIDEHTLALECHDGTVETLTAEKFVIACGSRPYHPNDVDFSHPRIYDSDSILSLHHEPRHVIIYGAGVIGCEYASIFRGMDVKVDLINTRDRLLAFLDQEMSDSLSYHFWNSGVVIRHNEEYEKIEGCDDGVIMHLKSGKKLKADCLLYANGRTGNTDSLALENIGLETDSRGQLKVNSMYQTALPHVYAVGDVIGYPSLASAAYDQGRIAAQALVKGEATAHLIEDIPTGIYTIPEISSVGKTEQQLTAMKVPYEVGRAQFKHLARAQIVGMNVGTLKILFHRETKEILGIHCFGERAAEIIHIGQAIMEQKGGGNTIEYFVNTTFNYPTMAEAYRVAALNGLNRLF</sequence>
<accession>P66009</accession>
<accession>Q8XFP5</accession>
<feature type="initiator methionine" description="Removed" evidence="1">
    <location>
        <position position="1"/>
    </location>
</feature>
<feature type="chain" id="PRO_0000068073" description="Soluble pyridine nucleotide transhydrogenase">
    <location>
        <begin position="2"/>
        <end position="466"/>
    </location>
</feature>
<feature type="binding site" evidence="2">
    <location>
        <begin position="36"/>
        <end position="45"/>
    </location>
    <ligand>
        <name>FAD</name>
        <dbReference type="ChEBI" id="CHEBI:57692"/>
    </ligand>
</feature>
<comment type="function">
    <text evidence="2">Conversion of NADPH, generated by peripheral catabolic pathways, to NADH, which can enter the respiratory chain for energy generation.</text>
</comment>
<comment type="catalytic activity">
    <reaction evidence="2">
        <text>NAD(+) + NADPH = NADH + NADP(+)</text>
        <dbReference type="Rhea" id="RHEA:11692"/>
        <dbReference type="ChEBI" id="CHEBI:57540"/>
        <dbReference type="ChEBI" id="CHEBI:57783"/>
        <dbReference type="ChEBI" id="CHEBI:57945"/>
        <dbReference type="ChEBI" id="CHEBI:58349"/>
        <dbReference type="EC" id="1.6.1.1"/>
    </reaction>
</comment>
<comment type="cofactor">
    <cofactor evidence="2">
        <name>FAD</name>
        <dbReference type="ChEBI" id="CHEBI:57692"/>
    </cofactor>
    <text evidence="2">Binds 1 FAD per subunit.</text>
</comment>
<comment type="subunit">
    <text evidence="1">Homooligomer; probable homooctamer.</text>
</comment>
<comment type="subcellular location">
    <subcellularLocation>
        <location evidence="2">Cytoplasm</location>
    </subcellularLocation>
</comment>
<comment type="similarity">
    <text evidence="2">Belongs to the class-I pyridine nucleotide-disulfide oxidoreductase family.</text>
</comment>
<keyword id="KW-0963">Cytoplasm</keyword>
<keyword id="KW-0274">FAD</keyword>
<keyword id="KW-0285">Flavoprotein</keyword>
<keyword id="KW-0520">NAD</keyword>
<keyword id="KW-0521">NADP</keyword>
<keyword id="KW-0560">Oxidoreductase</keyword>
<dbReference type="EC" id="1.6.1.1" evidence="2"/>
<dbReference type="EMBL" id="AL513382">
    <property type="protein sequence ID" value="CAD09504.1"/>
    <property type="molecule type" value="Genomic_DNA"/>
</dbReference>
<dbReference type="EMBL" id="AE014613">
    <property type="protein sequence ID" value="AAO71007.1"/>
    <property type="molecule type" value="Genomic_DNA"/>
</dbReference>
<dbReference type="RefSeq" id="NP_457934.1">
    <property type="nucleotide sequence ID" value="NC_003198.1"/>
</dbReference>
<dbReference type="RefSeq" id="WP_001120789.1">
    <property type="nucleotide sequence ID" value="NZ_WSUR01000010.1"/>
</dbReference>
<dbReference type="SMR" id="P66009"/>
<dbReference type="STRING" id="220341.gene:17587614"/>
<dbReference type="GeneID" id="66758375"/>
<dbReference type="KEGG" id="stt:t3499"/>
<dbReference type="KEGG" id="sty:STY3748"/>
<dbReference type="PATRIC" id="fig|220341.7.peg.3823"/>
<dbReference type="eggNOG" id="COG1249">
    <property type="taxonomic scope" value="Bacteria"/>
</dbReference>
<dbReference type="HOGENOM" id="CLU_016755_0_0_6"/>
<dbReference type="OMA" id="SHCLMAV"/>
<dbReference type="OrthoDB" id="9800167at2"/>
<dbReference type="Proteomes" id="UP000000541">
    <property type="component" value="Chromosome"/>
</dbReference>
<dbReference type="Proteomes" id="UP000002670">
    <property type="component" value="Chromosome"/>
</dbReference>
<dbReference type="GO" id="GO:0005829">
    <property type="term" value="C:cytosol"/>
    <property type="evidence" value="ECO:0007669"/>
    <property type="project" value="TreeGrafter"/>
</dbReference>
<dbReference type="GO" id="GO:0004148">
    <property type="term" value="F:dihydrolipoyl dehydrogenase (NADH) activity"/>
    <property type="evidence" value="ECO:0007669"/>
    <property type="project" value="TreeGrafter"/>
</dbReference>
<dbReference type="GO" id="GO:0050660">
    <property type="term" value="F:flavin adenine dinucleotide binding"/>
    <property type="evidence" value="ECO:0007669"/>
    <property type="project" value="TreeGrafter"/>
</dbReference>
<dbReference type="GO" id="GO:0003957">
    <property type="term" value="F:NAD(P)+ transhydrogenase (Si-specific) activity"/>
    <property type="evidence" value="ECO:0007669"/>
    <property type="project" value="UniProtKB-UniRule"/>
</dbReference>
<dbReference type="GO" id="GO:0006103">
    <property type="term" value="P:2-oxoglutarate metabolic process"/>
    <property type="evidence" value="ECO:0007669"/>
    <property type="project" value="TreeGrafter"/>
</dbReference>
<dbReference type="GO" id="GO:0006739">
    <property type="term" value="P:NADP metabolic process"/>
    <property type="evidence" value="ECO:0007669"/>
    <property type="project" value="UniProtKB-UniRule"/>
</dbReference>
<dbReference type="FunFam" id="3.30.390.30:FF:000002">
    <property type="entry name" value="Soluble pyridine nucleotide transhydrogenase"/>
    <property type="match status" value="1"/>
</dbReference>
<dbReference type="FunFam" id="3.50.50.60:FF:000008">
    <property type="entry name" value="Soluble pyridine nucleotide transhydrogenase"/>
    <property type="match status" value="1"/>
</dbReference>
<dbReference type="Gene3D" id="3.30.390.30">
    <property type="match status" value="1"/>
</dbReference>
<dbReference type="Gene3D" id="3.50.50.60">
    <property type="entry name" value="FAD/NAD(P)-binding domain"/>
    <property type="match status" value="2"/>
</dbReference>
<dbReference type="HAMAP" id="MF_00247">
    <property type="entry name" value="SthA"/>
    <property type="match status" value="1"/>
</dbReference>
<dbReference type="InterPro" id="IPR050151">
    <property type="entry name" value="Class-I_Pyr_Nuc-Dis_Oxidored"/>
</dbReference>
<dbReference type="InterPro" id="IPR036188">
    <property type="entry name" value="FAD/NAD-bd_sf"/>
</dbReference>
<dbReference type="InterPro" id="IPR023753">
    <property type="entry name" value="FAD/NAD-binding_dom"/>
</dbReference>
<dbReference type="InterPro" id="IPR016156">
    <property type="entry name" value="FAD/NAD-linked_Rdtase_dimer_sf"/>
</dbReference>
<dbReference type="InterPro" id="IPR001100">
    <property type="entry name" value="Pyr_nuc-diS_OxRdtase"/>
</dbReference>
<dbReference type="InterPro" id="IPR004099">
    <property type="entry name" value="Pyr_nucl-diS_OxRdtase_dimer"/>
</dbReference>
<dbReference type="InterPro" id="IPR022962">
    <property type="entry name" value="STH_gammaproteobact"/>
</dbReference>
<dbReference type="NCBIfam" id="NF003585">
    <property type="entry name" value="PRK05249.1"/>
    <property type="match status" value="1"/>
</dbReference>
<dbReference type="PANTHER" id="PTHR22912">
    <property type="entry name" value="DISULFIDE OXIDOREDUCTASE"/>
    <property type="match status" value="1"/>
</dbReference>
<dbReference type="PANTHER" id="PTHR22912:SF93">
    <property type="entry name" value="SOLUBLE PYRIDINE NUCLEOTIDE TRANSHYDROGENASE"/>
    <property type="match status" value="1"/>
</dbReference>
<dbReference type="Pfam" id="PF07992">
    <property type="entry name" value="Pyr_redox_2"/>
    <property type="match status" value="1"/>
</dbReference>
<dbReference type="Pfam" id="PF02852">
    <property type="entry name" value="Pyr_redox_dim"/>
    <property type="match status" value="1"/>
</dbReference>
<dbReference type="PIRSF" id="PIRSF000350">
    <property type="entry name" value="Mercury_reductase_MerA"/>
    <property type="match status" value="1"/>
</dbReference>
<dbReference type="PRINTS" id="PR00368">
    <property type="entry name" value="FADPNR"/>
</dbReference>
<dbReference type="PRINTS" id="PR00411">
    <property type="entry name" value="PNDRDTASEI"/>
</dbReference>
<dbReference type="SUPFAM" id="SSF51905">
    <property type="entry name" value="FAD/NAD(P)-binding domain"/>
    <property type="match status" value="1"/>
</dbReference>
<dbReference type="SUPFAM" id="SSF55424">
    <property type="entry name" value="FAD/NAD-linked reductases, dimerisation (C-terminal) domain"/>
    <property type="match status" value="1"/>
</dbReference>
<organism>
    <name type="scientific">Salmonella typhi</name>
    <dbReference type="NCBI Taxonomy" id="90370"/>
    <lineage>
        <taxon>Bacteria</taxon>
        <taxon>Pseudomonadati</taxon>
        <taxon>Pseudomonadota</taxon>
        <taxon>Gammaproteobacteria</taxon>
        <taxon>Enterobacterales</taxon>
        <taxon>Enterobacteriaceae</taxon>
        <taxon>Salmonella</taxon>
    </lineage>
</organism>
<protein>
    <recommendedName>
        <fullName evidence="2">Soluble pyridine nucleotide transhydrogenase</fullName>
        <shortName evidence="2">STH</shortName>
        <ecNumber evidence="2">1.6.1.1</ecNumber>
    </recommendedName>
    <alternativeName>
        <fullName evidence="2">NAD(P)(+) transhydrogenase [B-specific]</fullName>
    </alternativeName>
</protein>
<reference key="1">
    <citation type="journal article" date="2001" name="Nature">
        <title>Complete genome sequence of a multiple drug resistant Salmonella enterica serovar Typhi CT18.</title>
        <authorList>
            <person name="Parkhill J."/>
            <person name="Dougan G."/>
            <person name="James K.D."/>
            <person name="Thomson N.R."/>
            <person name="Pickard D."/>
            <person name="Wain J."/>
            <person name="Churcher C.M."/>
            <person name="Mungall K.L."/>
            <person name="Bentley S.D."/>
            <person name="Holden M.T.G."/>
            <person name="Sebaihia M."/>
            <person name="Baker S."/>
            <person name="Basham D."/>
            <person name="Brooks K."/>
            <person name="Chillingworth T."/>
            <person name="Connerton P."/>
            <person name="Cronin A."/>
            <person name="Davis P."/>
            <person name="Davies R.M."/>
            <person name="Dowd L."/>
            <person name="White N."/>
            <person name="Farrar J."/>
            <person name="Feltwell T."/>
            <person name="Hamlin N."/>
            <person name="Haque A."/>
            <person name="Hien T.T."/>
            <person name="Holroyd S."/>
            <person name="Jagels K."/>
            <person name="Krogh A."/>
            <person name="Larsen T.S."/>
            <person name="Leather S."/>
            <person name="Moule S."/>
            <person name="O'Gaora P."/>
            <person name="Parry C."/>
            <person name="Quail M.A."/>
            <person name="Rutherford K.M."/>
            <person name="Simmonds M."/>
            <person name="Skelton J."/>
            <person name="Stevens K."/>
            <person name="Whitehead S."/>
            <person name="Barrell B.G."/>
        </authorList>
    </citation>
    <scope>NUCLEOTIDE SEQUENCE [LARGE SCALE GENOMIC DNA]</scope>
    <source>
        <strain>CT18</strain>
    </source>
</reference>
<reference key="2">
    <citation type="journal article" date="2003" name="J. Bacteriol.">
        <title>Comparative genomics of Salmonella enterica serovar Typhi strains Ty2 and CT18.</title>
        <authorList>
            <person name="Deng W."/>
            <person name="Liou S.-R."/>
            <person name="Plunkett G. III"/>
            <person name="Mayhew G.F."/>
            <person name="Rose D.J."/>
            <person name="Burland V."/>
            <person name="Kodoyianni V."/>
            <person name="Schwartz D.C."/>
            <person name="Blattner F.R."/>
        </authorList>
    </citation>
    <scope>NUCLEOTIDE SEQUENCE [LARGE SCALE GENOMIC DNA]</scope>
    <source>
        <strain>ATCC 700931 / Ty2</strain>
    </source>
</reference>
<proteinExistence type="inferred from homology"/>